<dbReference type="EMBL" id="AF129402">
    <property type="protein sequence ID" value="AAF13778.1"/>
    <property type="molecule type" value="Genomic_DNA"/>
</dbReference>
<dbReference type="SMR" id="Q9RQ80"/>
<dbReference type="STRING" id="118101.ATN01_00035"/>
<dbReference type="GO" id="GO:0005886">
    <property type="term" value="C:plasma membrane"/>
    <property type="evidence" value="ECO:0007669"/>
    <property type="project" value="UniProtKB-SubCell"/>
</dbReference>
<dbReference type="GO" id="GO:0045259">
    <property type="term" value="C:proton-transporting ATP synthase complex"/>
    <property type="evidence" value="ECO:0007669"/>
    <property type="project" value="UniProtKB-KW"/>
</dbReference>
<dbReference type="GO" id="GO:0005524">
    <property type="term" value="F:ATP binding"/>
    <property type="evidence" value="ECO:0007669"/>
    <property type="project" value="UniProtKB-UniRule"/>
</dbReference>
<dbReference type="GO" id="GO:0046933">
    <property type="term" value="F:proton-transporting ATP synthase activity, rotational mechanism"/>
    <property type="evidence" value="ECO:0007669"/>
    <property type="project" value="UniProtKB-UniRule"/>
</dbReference>
<dbReference type="GO" id="GO:0042777">
    <property type="term" value="P:proton motive force-driven plasma membrane ATP synthesis"/>
    <property type="evidence" value="ECO:0007669"/>
    <property type="project" value="UniProtKB-UniRule"/>
</dbReference>
<dbReference type="CDD" id="cd12151">
    <property type="entry name" value="F1-ATPase_gamma"/>
    <property type="match status" value="1"/>
</dbReference>
<dbReference type="FunFam" id="1.10.287.80:FF:000005">
    <property type="entry name" value="ATP synthase gamma chain"/>
    <property type="match status" value="1"/>
</dbReference>
<dbReference type="Gene3D" id="3.40.1380.10">
    <property type="match status" value="1"/>
</dbReference>
<dbReference type="Gene3D" id="1.10.287.80">
    <property type="entry name" value="ATP synthase, gamma subunit, helix hairpin domain"/>
    <property type="match status" value="1"/>
</dbReference>
<dbReference type="HAMAP" id="MF_00815">
    <property type="entry name" value="ATP_synth_gamma_bact"/>
    <property type="match status" value="1"/>
</dbReference>
<dbReference type="InterPro" id="IPR035968">
    <property type="entry name" value="ATP_synth_F1_ATPase_gsu"/>
</dbReference>
<dbReference type="InterPro" id="IPR000131">
    <property type="entry name" value="ATP_synth_F1_gsu"/>
</dbReference>
<dbReference type="InterPro" id="IPR023632">
    <property type="entry name" value="ATP_synth_F1_gsu_CS"/>
</dbReference>
<dbReference type="NCBIfam" id="TIGR01146">
    <property type="entry name" value="ATPsyn_F1gamma"/>
    <property type="match status" value="1"/>
</dbReference>
<dbReference type="NCBIfam" id="NF004144">
    <property type="entry name" value="PRK05621.1-1"/>
    <property type="match status" value="1"/>
</dbReference>
<dbReference type="PANTHER" id="PTHR11693">
    <property type="entry name" value="ATP SYNTHASE GAMMA CHAIN"/>
    <property type="match status" value="1"/>
</dbReference>
<dbReference type="PANTHER" id="PTHR11693:SF22">
    <property type="entry name" value="ATP SYNTHASE SUBUNIT GAMMA, MITOCHONDRIAL"/>
    <property type="match status" value="1"/>
</dbReference>
<dbReference type="Pfam" id="PF00231">
    <property type="entry name" value="ATP-synt"/>
    <property type="match status" value="1"/>
</dbReference>
<dbReference type="PRINTS" id="PR00126">
    <property type="entry name" value="ATPASEGAMMA"/>
</dbReference>
<dbReference type="SUPFAM" id="SSF52943">
    <property type="entry name" value="ATP synthase (F1-ATPase), gamma subunit"/>
    <property type="match status" value="1"/>
</dbReference>
<dbReference type="PROSITE" id="PS00153">
    <property type="entry name" value="ATPASE_GAMMA"/>
    <property type="match status" value="1"/>
</dbReference>
<accession>Q9RQ80</accession>
<organism>
    <name type="scientific">Buchnera aphidicola subsp. Diuraphis noxia</name>
    <dbReference type="NCBI Taxonomy" id="118101"/>
    <lineage>
        <taxon>Bacteria</taxon>
        <taxon>Pseudomonadati</taxon>
        <taxon>Pseudomonadota</taxon>
        <taxon>Gammaproteobacteria</taxon>
        <taxon>Enterobacterales</taxon>
        <taxon>Erwiniaceae</taxon>
        <taxon>Buchnera</taxon>
    </lineage>
</organism>
<proteinExistence type="inferred from homology"/>
<sequence length="290" mass="33369">MASIKEIKTQITSVVNTKKITKAMEMVAISKMRKTEERMSSGRPYSEIIRKVINHVAQGHLEYKHSYLETRKIKRIGLIIVSSDRGLCGSLNSNLFRKVLFKIQNFTQKNIPCDLILFGLKSLPVFKLCENNILSKITHLGEHPNILKVINGIDVLLKKYQIKRIDKIFIAYNEFHNKMSQYPKIIQLLPLSRIKSETISTKRWDYLYESESKLIIDSLFKRYIESQVYQSILENIASEHAARMMAMKTATENSTERIKELKLLYNKVRQATITQELTEIIAGASAVSTG</sequence>
<keyword id="KW-0066">ATP synthesis</keyword>
<keyword id="KW-1003">Cell membrane</keyword>
<keyword id="KW-0139">CF(1)</keyword>
<keyword id="KW-0375">Hydrogen ion transport</keyword>
<keyword id="KW-0406">Ion transport</keyword>
<keyword id="KW-0472">Membrane</keyword>
<keyword id="KW-0813">Transport</keyword>
<name>ATPG_BUCDN</name>
<reference key="1">
    <citation type="journal article" date="1999" name="Mol. Biol. Evol.">
        <title>Sequence evolution in bacterial endosymbionts having extreme base compositions.</title>
        <authorList>
            <person name="Clark M.A."/>
            <person name="Moran N.A."/>
            <person name="Baumann P."/>
        </authorList>
    </citation>
    <scope>NUCLEOTIDE SEQUENCE [GENOMIC DNA]</scope>
</reference>
<comment type="function">
    <text evidence="1">Produces ATP from ADP in the presence of a proton gradient across the membrane. The gamma chain is believed to be important in regulating ATPase activity and the flow of protons through the CF(0) complex.</text>
</comment>
<comment type="subunit">
    <text evidence="1">F-type ATPases have 2 components, CF(1) - the catalytic core - and CF(0) - the membrane proton channel. CF(1) has five subunits: alpha(3), beta(3), gamma(1), delta(1), epsilon(1). CF(0) has three main subunits: a, b and c.</text>
</comment>
<comment type="subcellular location">
    <subcellularLocation>
        <location evidence="1">Cell membrane</location>
        <topology evidence="1">Peripheral membrane protein</topology>
    </subcellularLocation>
</comment>
<comment type="similarity">
    <text evidence="1">Belongs to the ATPase gamma chain family.</text>
</comment>
<evidence type="ECO:0000255" key="1">
    <source>
        <dbReference type="HAMAP-Rule" id="MF_00815"/>
    </source>
</evidence>
<gene>
    <name evidence="1" type="primary">atpG</name>
</gene>
<feature type="chain" id="PRO_0000073254" description="ATP synthase gamma chain">
    <location>
        <begin position="1"/>
        <end position="290"/>
    </location>
</feature>
<protein>
    <recommendedName>
        <fullName evidence="1">ATP synthase gamma chain</fullName>
    </recommendedName>
    <alternativeName>
        <fullName evidence="1">ATP synthase F1 sector gamma subunit</fullName>
    </alternativeName>
    <alternativeName>
        <fullName evidence="1">F-ATPase gamma subunit</fullName>
    </alternativeName>
</protein>